<feature type="signal peptide" evidence="1">
    <location>
        <begin position="1"/>
        <end position="47"/>
    </location>
</feature>
<feature type="chain" id="PRO_0000014921" description="Immunoglobulin superfamily DCC subclass member 3">
    <location>
        <begin position="48"/>
        <end position="813"/>
    </location>
</feature>
<feature type="transmembrane region" description="Helical" evidence="1">
    <location>
        <begin position="653"/>
        <end position="673"/>
    </location>
</feature>
<feature type="domain" description="Ig-like C2-type 1">
    <location>
        <begin position="49"/>
        <end position="151"/>
    </location>
</feature>
<feature type="domain" description="Ig-like C2-type 2">
    <location>
        <begin position="151"/>
        <end position="232"/>
    </location>
</feature>
<feature type="domain" description="Ig-like C2-type 3">
    <location>
        <begin position="250"/>
        <end position="333"/>
    </location>
</feature>
<feature type="domain" description="Ig-like C2-type 4">
    <location>
        <begin position="341"/>
        <end position="428"/>
    </location>
</feature>
<feature type="domain" description="Fibronectin type-III 1" evidence="3">
    <location>
        <begin position="438"/>
        <end position="532"/>
    </location>
</feature>
<feature type="domain" description="Fibronectin type-III 2" evidence="3">
    <location>
        <begin position="535"/>
        <end position="630"/>
    </location>
</feature>
<feature type="region of interest" description="Disordered" evidence="4">
    <location>
        <begin position="1"/>
        <end position="21"/>
    </location>
</feature>
<feature type="region of interest" description="Disordered" evidence="4">
    <location>
        <begin position="689"/>
        <end position="724"/>
    </location>
</feature>
<feature type="region of interest" description="Disordered" evidence="4">
    <location>
        <begin position="775"/>
        <end position="813"/>
    </location>
</feature>
<feature type="compositionally biased region" description="Low complexity" evidence="4">
    <location>
        <begin position="9"/>
        <end position="19"/>
    </location>
</feature>
<feature type="glycosylation site" description="N-linked (GlcNAc...) asparagine" evidence="1">
    <location>
        <position position="105"/>
    </location>
</feature>
<feature type="glycosylation site" description="N-linked (GlcNAc...) asparagine" evidence="1">
    <location>
        <position position="258"/>
    </location>
</feature>
<feature type="glycosylation site" description="N-linked (GlcNAc...) asparagine" evidence="1">
    <location>
        <position position="393"/>
    </location>
</feature>
<feature type="glycosylation site" description="N-linked (GlcNAc...) asparagine" evidence="1">
    <location>
        <position position="394"/>
    </location>
</feature>
<feature type="glycosylation site" description="N-linked (GlcNAc...) asparagine" evidence="1">
    <location>
        <position position="592"/>
    </location>
</feature>
<feature type="glycosylation site" description="N-linked (GlcNAc...) asparagine" evidence="1">
    <location>
        <position position="616"/>
    </location>
</feature>
<feature type="glycosylation site" description="N-linked (GlcNAc...) asparagine" evidence="1">
    <location>
        <position position="646"/>
    </location>
</feature>
<feature type="disulfide bond" evidence="2">
    <location>
        <begin position="75"/>
        <end position="129"/>
    </location>
</feature>
<feature type="disulfide bond" evidence="2">
    <location>
        <begin position="172"/>
        <end position="221"/>
    </location>
</feature>
<feature type="disulfide bond" evidence="2">
    <location>
        <begin position="271"/>
        <end position="319"/>
    </location>
</feature>
<feature type="disulfide bond" evidence="2">
    <location>
        <begin position="363"/>
        <end position="412"/>
    </location>
</feature>
<feature type="splice variant" id="VSP_012321" description="In isoform 2." evidence="7 8">
    <location>
        <begin position="631"/>
        <end position="650"/>
    </location>
</feature>
<sequence>MAEPRTASPRRLPALRRPGFLPPLLPPPPPPLLLLLLLLPLPAPSLGLGHSAELAFSVEPNDDIANPGQPIVLGCKVEGTPPVQVSWRKNGAELPEGTHTTLLANGSLLIHHFRLEQGGSPSDEGDYECVAQNRFGLLVSRKARLQAATMSDFHVHPQAVTGEEGGVARFQCQIHGLPKPLITWEKNRVPIDTDDERYTLLPKGVLQITGLRAEDSGIFHCVASNIASVRVSHGARLTVSGSGSGTYKEPTILVGPENLTLTVHQTAVLECVATGNPRPIVSWSRLDGRPIGVEGIQVLGTGNLIISDVTVQHSGVYVCAANRPGTRVRRTAQGRLVVQAPAEFVQHPQSISRPAGTTAMFTCQAQGEPPPHVTWLKNGQVLGAGGHVRLKNNNSTLSISGVGPEDEAIYQCVAENIAGSSQASARLTVLWAEGLPGPPRNVRAVSVSSTEVRVSWSEPLAHTKEIIGYVLHIRKAADSPKLEYQEAVSKSTFQHLVRDLEPSTAYSFYIKAYTPRGASLASVPTLASTLGEAPVPPPLSVRLLGSSSLQLLWKPWPRLAQHNGGFKLFYRPVSATSFTGPILLPGTVSSYNLSQLDPSTVYEVKLLAYNQHGDGNATVRFVSLKGASERTALTPPCDCRKEDVTNHTSTTGIVIGIHIGVTCIIFCVLFLLFGQRGRVLLCKDVENQLSPPQGPRSQRDPGILALNGLSRGEGGQLSRDEKPVDAKELEQLFPTAGSAAQPGSTPTDPAAPAPCEETQLSMVQLQGFNLVAGRTTEATSPCAGPGPVPAPQDIGPVPLSEGQTQPPAVAAPQ</sequence>
<evidence type="ECO:0000255" key="1"/>
<evidence type="ECO:0000255" key="2">
    <source>
        <dbReference type="PROSITE-ProRule" id="PRU00114"/>
    </source>
</evidence>
<evidence type="ECO:0000255" key="3">
    <source>
        <dbReference type="PROSITE-ProRule" id="PRU00316"/>
    </source>
</evidence>
<evidence type="ECO:0000256" key="4">
    <source>
        <dbReference type="SAM" id="MobiDB-lite"/>
    </source>
</evidence>
<evidence type="ECO:0000269" key="5">
    <source>
    </source>
</evidence>
<evidence type="ECO:0000269" key="6">
    <source>
    </source>
</evidence>
<evidence type="ECO:0000303" key="7">
    <source>
    </source>
</evidence>
<evidence type="ECO:0000303" key="8">
    <source>
    </source>
</evidence>
<evidence type="ECO:0000305" key="9"/>
<name>IGDC3_MOUSE</name>
<comment type="subcellular location">
    <subcellularLocation>
        <location evidence="1">Membrane</location>
        <topology evidence="1">Single-pass membrane protein</topology>
    </subcellularLocation>
</comment>
<comment type="alternative products">
    <event type="alternative splicing"/>
    <isoform>
        <id>Q8BQC3-1</id>
        <name>1</name>
        <sequence type="displayed"/>
    </isoform>
    <isoform>
        <id>Q8BQC3-2</id>
        <name>2</name>
        <sequence type="described" ref="VSP_012321"/>
    </isoform>
</comment>
<comment type="tissue specificity">
    <text evidence="5 6">Detected in cerebellum, kidney, heart, lung, skeletal muscle and spleen.</text>
</comment>
<comment type="developmental stage">
    <text evidence="5">Strongly expressed in embryos from 9.5 dpc to 10.5 dpc. Expression is much lower at 11.5 dpc and virtually extinct at 15.5 dpc. Detected in neural tube and lateral mesoderm at 9.5 dpc. At 10.5 dpc detected in fore and hind limb buds and lateral plate mesoderm, throughout the neural tube, in mesencephalon and dorsal diencephalon.</text>
</comment>
<comment type="similarity">
    <text evidence="9">Belongs to the immunoglobulin superfamily. DCC family.</text>
</comment>
<keyword id="KW-0025">Alternative splicing</keyword>
<keyword id="KW-1015">Disulfide bond</keyword>
<keyword id="KW-0325">Glycoprotein</keyword>
<keyword id="KW-0393">Immunoglobulin domain</keyword>
<keyword id="KW-0472">Membrane</keyword>
<keyword id="KW-1185">Reference proteome</keyword>
<keyword id="KW-0677">Repeat</keyword>
<keyword id="KW-0732">Signal</keyword>
<keyword id="KW-0812">Transmembrane</keyword>
<keyword id="KW-1133">Transmembrane helix</keyword>
<dbReference type="EMBL" id="AK051027">
    <property type="protein sequence ID" value="BAC34502.1"/>
    <property type="molecule type" value="mRNA"/>
</dbReference>
<dbReference type="EMBL" id="BC053057">
    <property type="protein sequence ID" value="AAH53057.1"/>
    <property type="molecule type" value="mRNA"/>
</dbReference>
<dbReference type="EMBL" id="AF026465">
    <property type="protein sequence ID" value="AAD12133.1"/>
    <property type="molecule type" value="mRNA"/>
</dbReference>
<dbReference type="EMBL" id="AF026466">
    <property type="protein sequence ID" value="AAD12123.1"/>
    <property type="molecule type" value="Genomic_DNA"/>
</dbReference>
<dbReference type="EMBL" id="AF026466">
    <property type="protein sequence ID" value="AAD12124.1"/>
    <property type="molecule type" value="Genomic_DNA"/>
</dbReference>
<dbReference type="CCDS" id="CCDS52835.1">
    <molecule id="Q8BQC3-2"/>
</dbReference>
<dbReference type="CCDS" id="CCDS90599.1">
    <molecule id="Q8BQC3-1"/>
</dbReference>
<dbReference type="RefSeq" id="NP_001344186.1">
    <molecule id="Q8BQC3-1"/>
    <property type="nucleotide sequence ID" value="NM_001357257.1"/>
</dbReference>
<dbReference type="RefSeq" id="NP_033014.1">
    <molecule id="Q8BQC3-2"/>
    <property type="nucleotide sequence ID" value="NM_008988.3"/>
</dbReference>
<dbReference type="RefSeq" id="XP_006510936.1">
    <property type="nucleotide sequence ID" value="XM_006510873.2"/>
</dbReference>
<dbReference type="SMR" id="Q8BQC3"/>
<dbReference type="FunCoup" id="Q8BQC3">
    <property type="interactions" value="12"/>
</dbReference>
<dbReference type="IntAct" id="Q8BQC3">
    <property type="interactions" value="1"/>
</dbReference>
<dbReference type="MINT" id="Q8BQC3"/>
<dbReference type="STRING" id="10090.ENSMUSP00000034961"/>
<dbReference type="GlyCosmos" id="Q8BQC3">
    <property type="glycosylation" value="7 sites, No reported glycans"/>
</dbReference>
<dbReference type="GlyGen" id="Q8BQC3">
    <property type="glycosylation" value="8 sites"/>
</dbReference>
<dbReference type="iPTMnet" id="Q8BQC3"/>
<dbReference type="PhosphoSitePlus" id="Q8BQC3"/>
<dbReference type="PaxDb" id="10090-ENSMUSP00000034961"/>
<dbReference type="ProteomicsDB" id="267217">
    <molecule id="Q8BQC3-1"/>
</dbReference>
<dbReference type="ProteomicsDB" id="267218">
    <molecule id="Q8BQC3-2"/>
</dbReference>
<dbReference type="Antibodypedia" id="2652">
    <property type="antibodies" value="46 antibodies from 12 providers"/>
</dbReference>
<dbReference type="DNASU" id="19289"/>
<dbReference type="Ensembl" id="ENSMUST00000034961.6">
    <molecule id="Q8BQC3-2"/>
    <property type="protein sequence ID" value="ENSMUSP00000034961.5"/>
    <property type="gene ID" value="ENSMUSG00000032394.7"/>
</dbReference>
<dbReference type="Ensembl" id="ENSMUST00000217371.2">
    <molecule id="Q8BQC3-1"/>
    <property type="protein sequence ID" value="ENSMUSP00000149084.2"/>
    <property type="gene ID" value="ENSMUSG00000032394.7"/>
</dbReference>
<dbReference type="GeneID" id="19289"/>
<dbReference type="KEGG" id="mmu:19289"/>
<dbReference type="UCSC" id="uc009qcv.1">
    <molecule id="Q8BQC3-2"/>
    <property type="organism name" value="mouse"/>
</dbReference>
<dbReference type="UCSC" id="uc009qcw.1">
    <molecule id="Q8BQC3-1"/>
    <property type="organism name" value="mouse"/>
</dbReference>
<dbReference type="AGR" id="MGI:1202390"/>
<dbReference type="CTD" id="9543"/>
<dbReference type="MGI" id="MGI:1202390">
    <property type="gene designation" value="Igdcc3"/>
</dbReference>
<dbReference type="VEuPathDB" id="HostDB:ENSMUSG00000032394"/>
<dbReference type="eggNOG" id="KOG4221">
    <property type="taxonomic scope" value="Eukaryota"/>
</dbReference>
<dbReference type="eggNOG" id="KOG4222">
    <property type="taxonomic scope" value="Eukaryota"/>
</dbReference>
<dbReference type="GeneTree" id="ENSGT00940000156969"/>
<dbReference type="HOGENOM" id="CLU_018612_2_0_1"/>
<dbReference type="InParanoid" id="Q8BQC3"/>
<dbReference type="OMA" id="CGLMEGK"/>
<dbReference type="OrthoDB" id="438268at2759"/>
<dbReference type="PhylomeDB" id="Q8BQC3"/>
<dbReference type="TreeFam" id="TF321506"/>
<dbReference type="BioGRID-ORCS" id="19289">
    <property type="hits" value="2 hits in 78 CRISPR screens"/>
</dbReference>
<dbReference type="ChiTaRS" id="Igdcc3">
    <property type="organism name" value="mouse"/>
</dbReference>
<dbReference type="PRO" id="PR:Q8BQC3"/>
<dbReference type="Proteomes" id="UP000000589">
    <property type="component" value="Chromosome 9"/>
</dbReference>
<dbReference type="RNAct" id="Q8BQC3">
    <property type="molecule type" value="protein"/>
</dbReference>
<dbReference type="Bgee" id="ENSMUSG00000032394">
    <property type="expression patterns" value="Expressed in embryonic post-anal tail and 99 other cell types or tissues"/>
</dbReference>
<dbReference type="GO" id="GO:0016020">
    <property type="term" value="C:membrane"/>
    <property type="evidence" value="ECO:0007669"/>
    <property type="project" value="UniProtKB-SubCell"/>
</dbReference>
<dbReference type="GO" id="GO:0050885">
    <property type="term" value="P:neuromuscular process controlling balance"/>
    <property type="evidence" value="ECO:0000315"/>
    <property type="project" value="MGI"/>
</dbReference>
<dbReference type="CDD" id="cd00063">
    <property type="entry name" value="FN3"/>
    <property type="match status" value="2"/>
</dbReference>
<dbReference type="CDD" id="cd00096">
    <property type="entry name" value="Ig"/>
    <property type="match status" value="1"/>
</dbReference>
<dbReference type="FunFam" id="2.60.40.10:FF:001494">
    <property type="entry name" value="Immunoglobulin superfamily DCC subclass member 3"/>
    <property type="match status" value="1"/>
</dbReference>
<dbReference type="FunFam" id="2.60.40.10:FF:000577">
    <property type="entry name" value="immunoglobulin superfamily DCC subclass member 3"/>
    <property type="match status" value="1"/>
</dbReference>
<dbReference type="FunFam" id="2.60.40.10:FF:000930">
    <property type="entry name" value="immunoglobulin superfamily DCC subclass member 3"/>
    <property type="match status" value="1"/>
</dbReference>
<dbReference type="FunFam" id="2.60.40.10:FF:001881">
    <property type="entry name" value="immunoglobulin superfamily DCC subclass member 3"/>
    <property type="match status" value="1"/>
</dbReference>
<dbReference type="FunFam" id="2.60.40.10:FF:000189">
    <property type="entry name" value="Neogenin isoform 3"/>
    <property type="match status" value="1"/>
</dbReference>
<dbReference type="FunFam" id="2.60.40.10:FF:000299">
    <property type="entry name" value="protogenin isoform X2"/>
    <property type="match status" value="1"/>
</dbReference>
<dbReference type="Gene3D" id="2.60.40.10">
    <property type="entry name" value="Immunoglobulins"/>
    <property type="match status" value="6"/>
</dbReference>
<dbReference type="InterPro" id="IPR003961">
    <property type="entry name" value="FN3_dom"/>
</dbReference>
<dbReference type="InterPro" id="IPR036116">
    <property type="entry name" value="FN3_sf"/>
</dbReference>
<dbReference type="InterPro" id="IPR007110">
    <property type="entry name" value="Ig-like_dom"/>
</dbReference>
<dbReference type="InterPro" id="IPR036179">
    <property type="entry name" value="Ig-like_dom_sf"/>
</dbReference>
<dbReference type="InterPro" id="IPR013783">
    <property type="entry name" value="Ig-like_fold"/>
</dbReference>
<dbReference type="InterPro" id="IPR013098">
    <property type="entry name" value="Ig_I-set"/>
</dbReference>
<dbReference type="InterPro" id="IPR003599">
    <property type="entry name" value="Ig_sub"/>
</dbReference>
<dbReference type="InterPro" id="IPR003598">
    <property type="entry name" value="Ig_sub2"/>
</dbReference>
<dbReference type="PANTHER" id="PTHR44170:SF20">
    <property type="entry name" value="IMMUNOGLOBULIN SUPERFAMILY DCC SUBCLASS MEMBER 3"/>
    <property type="match status" value="1"/>
</dbReference>
<dbReference type="PANTHER" id="PTHR44170">
    <property type="entry name" value="PROTEIN SIDEKICK"/>
    <property type="match status" value="1"/>
</dbReference>
<dbReference type="Pfam" id="PF00041">
    <property type="entry name" value="fn3"/>
    <property type="match status" value="2"/>
</dbReference>
<dbReference type="Pfam" id="PF07679">
    <property type="entry name" value="I-set"/>
    <property type="match status" value="3"/>
</dbReference>
<dbReference type="Pfam" id="PF13927">
    <property type="entry name" value="Ig_3"/>
    <property type="match status" value="1"/>
</dbReference>
<dbReference type="SMART" id="SM00060">
    <property type="entry name" value="FN3"/>
    <property type="match status" value="2"/>
</dbReference>
<dbReference type="SMART" id="SM00409">
    <property type="entry name" value="IG"/>
    <property type="match status" value="4"/>
</dbReference>
<dbReference type="SMART" id="SM00408">
    <property type="entry name" value="IGc2"/>
    <property type="match status" value="4"/>
</dbReference>
<dbReference type="SUPFAM" id="SSF49265">
    <property type="entry name" value="Fibronectin type III"/>
    <property type="match status" value="1"/>
</dbReference>
<dbReference type="SUPFAM" id="SSF48726">
    <property type="entry name" value="Immunoglobulin"/>
    <property type="match status" value="4"/>
</dbReference>
<dbReference type="PROSITE" id="PS50853">
    <property type="entry name" value="FN3"/>
    <property type="match status" value="2"/>
</dbReference>
<dbReference type="PROSITE" id="PS50835">
    <property type="entry name" value="IG_LIKE"/>
    <property type="match status" value="4"/>
</dbReference>
<reference key="1">
    <citation type="journal article" date="2005" name="Science">
        <title>The transcriptional landscape of the mammalian genome.</title>
        <authorList>
            <person name="Carninci P."/>
            <person name="Kasukawa T."/>
            <person name="Katayama S."/>
            <person name="Gough J."/>
            <person name="Frith M.C."/>
            <person name="Maeda N."/>
            <person name="Oyama R."/>
            <person name="Ravasi T."/>
            <person name="Lenhard B."/>
            <person name="Wells C."/>
            <person name="Kodzius R."/>
            <person name="Shimokawa K."/>
            <person name="Bajic V.B."/>
            <person name="Brenner S.E."/>
            <person name="Batalov S."/>
            <person name="Forrest A.R."/>
            <person name="Zavolan M."/>
            <person name="Davis M.J."/>
            <person name="Wilming L.G."/>
            <person name="Aidinis V."/>
            <person name="Allen J.E."/>
            <person name="Ambesi-Impiombato A."/>
            <person name="Apweiler R."/>
            <person name="Aturaliya R.N."/>
            <person name="Bailey T.L."/>
            <person name="Bansal M."/>
            <person name="Baxter L."/>
            <person name="Beisel K.W."/>
            <person name="Bersano T."/>
            <person name="Bono H."/>
            <person name="Chalk A.M."/>
            <person name="Chiu K.P."/>
            <person name="Choudhary V."/>
            <person name="Christoffels A."/>
            <person name="Clutterbuck D.R."/>
            <person name="Crowe M.L."/>
            <person name="Dalla E."/>
            <person name="Dalrymple B.P."/>
            <person name="de Bono B."/>
            <person name="Della Gatta G."/>
            <person name="di Bernardo D."/>
            <person name="Down T."/>
            <person name="Engstrom P."/>
            <person name="Fagiolini M."/>
            <person name="Faulkner G."/>
            <person name="Fletcher C.F."/>
            <person name="Fukushima T."/>
            <person name="Furuno M."/>
            <person name="Futaki S."/>
            <person name="Gariboldi M."/>
            <person name="Georgii-Hemming P."/>
            <person name="Gingeras T.R."/>
            <person name="Gojobori T."/>
            <person name="Green R.E."/>
            <person name="Gustincich S."/>
            <person name="Harbers M."/>
            <person name="Hayashi Y."/>
            <person name="Hensch T.K."/>
            <person name="Hirokawa N."/>
            <person name="Hill D."/>
            <person name="Huminiecki L."/>
            <person name="Iacono M."/>
            <person name="Ikeo K."/>
            <person name="Iwama A."/>
            <person name="Ishikawa T."/>
            <person name="Jakt M."/>
            <person name="Kanapin A."/>
            <person name="Katoh M."/>
            <person name="Kawasawa Y."/>
            <person name="Kelso J."/>
            <person name="Kitamura H."/>
            <person name="Kitano H."/>
            <person name="Kollias G."/>
            <person name="Krishnan S.P."/>
            <person name="Kruger A."/>
            <person name="Kummerfeld S.K."/>
            <person name="Kurochkin I.V."/>
            <person name="Lareau L.F."/>
            <person name="Lazarevic D."/>
            <person name="Lipovich L."/>
            <person name="Liu J."/>
            <person name="Liuni S."/>
            <person name="McWilliam S."/>
            <person name="Madan Babu M."/>
            <person name="Madera M."/>
            <person name="Marchionni L."/>
            <person name="Matsuda H."/>
            <person name="Matsuzawa S."/>
            <person name="Miki H."/>
            <person name="Mignone F."/>
            <person name="Miyake S."/>
            <person name="Morris K."/>
            <person name="Mottagui-Tabar S."/>
            <person name="Mulder N."/>
            <person name="Nakano N."/>
            <person name="Nakauchi H."/>
            <person name="Ng P."/>
            <person name="Nilsson R."/>
            <person name="Nishiguchi S."/>
            <person name="Nishikawa S."/>
            <person name="Nori F."/>
            <person name="Ohara O."/>
            <person name="Okazaki Y."/>
            <person name="Orlando V."/>
            <person name="Pang K.C."/>
            <person name="Pavan W.J."/>
            <person name="Pavesi G."/>
            <person name="Pesole G."/>
            <person name="Petrovsky N."/>
            <person name="Piazza S."/>
            <person name="Reed J."/>
            <person name="Reid J.F."/>
            <person name="Ring B.Z."/>
            <person name="Ringwald M."/>
            <person name="Rost B."/>
            <person name="Ruan Y."/>
            <person name="Salzberg S.L."/>
            <person name="Sandelin A."/>
            <person name="Schneider C."/>
            <person name="Schoenbach C."/>
            <person name="Sekiguchi K."/>
            <person name="Semple C.A."/>
            <person name="Seno S."/>
            <person name="Sessa L."/>
            <person name="Sheng Y."/>
            <person name="Shibata Y."/>
            <person name="Shimada H."/>
            <person name="Shimada K."/>
            <person name="Silva D."/>
            <person name="Sinclair B."/>
            <person name="Sperling S."/>
            <person name="Stupka E."/>
            <person name="Sugiura K."/>
            <person name="Sultana R."/>
            <person name="Takenaka Y."/>
            <person name="Taki K."/>
            <person name="Tammoja K."/>
            <person name="Tan S.L."/>
            <person name="Tang S."/>
            <person name="Taylor M.S."/>
            <person name="Tegner J."/>
            <person name="Teichmann S.A."/>
            <person name="Ueda H.R."/>
            <person name="van Nimwegen E."/>
            <person name="Verardo R."/>
            <person name="Wei C.L."/>
            <person name="Yagi K."/>
            <person name="Yamanishi H."/>
            <person name="Zabarovsky E."/>
            <person name="Zhu S."/>
            <person name="Zimmer A."/>
            <person name="Hide W."/>
            <person name="Bult C."/>
            <person name="Grimmond S.M."/>
            <person name="Teasdale R.D."/>
            <person name="Liu E.T."/>
            <person name="Brusic V."/>
            <person name="Quackenbush J."/>
            <person name="Wahlestedt C."/>
            <person name="Mattick J.S."/>
            <person name="Hume D.A."/>
            <person name="Kai C."/>
            <person name="Sasaki D."/>
            <person name="Tomaru Y."/>
            <person name="Fukuda S."/>
            <person name="Kanamori-Katayama M."/>
            <person name="Suzuki M."/>
            <person name="Aoki J."/>
            <person name="Arakawa T."/>
            <person name="Iida J."/>
            <person name="Imamura K."/>
            <person name="Itoh M."/>
            <person name="Kato T."/>
            <person name="Kawaji H."/>
            <person name="Kawagashira N."/>
            <person name="Kawashima T."/>
            <person name="Kojima M."/>
            <person name="Kondo S."/>
            <person name="Konno H."/>
            <person name="Nakano K."/>
            <person name="Ninomiya N."/>
            <person name="Nishio T."/>
            <person name="Okada M."/>
            <person name="Plessy C."/>
            <person name="Shibata K."/>
            <person name="Shiraki T."/>
            <person name="Suzuki S."/>
            <person name="Tagami M."/>
            <person name="Waki K."/>
            <person name="Watahiki A."/>
            <person name="Okamura-Oho Y."/>
            <person name="Suzuki H."/>
            <person name="Kawai J."/>
            <person name="Hayashizaki Y."/>
        </authorList>
    </citation>
    <scope>NUCLEOTIDE SEQUENCE [LARGE SCALE MRNA] (ISOFORM 1)</scope>
    <source>
        <strain>C57BL/6J</strain>
        <tissue>Embryo</tissue>
    </source>
</reference>
<reference key="2">
    <citation type="journal article" date="2004" name="Genome Res.">
        <title>The status, quality, and expansion of the NIH full-length cDNA project: the Mammalian Gene Collection (MGC).</title>
        <authorList>
            <consortium name="The MGC Project Team"/>
        </authorList>
    </citation>
    <scope>NUCLEOTIDE SEQUENCE [LARGE SCALE MRNA] (ISOFORM 1)</scope>
    <source>
        <strain>C57BL/6J</strain>
        <tissue>Brain</tissue>
    </source>
</reference>
<reference key="3">
    <citation type="journal article" date="1998" name="Mech. Dev.">
        <title>Punc, a novel mouse gene of the immunoglobulin superfamily, is expressed predominantly in the developing nervous system.</title>
        <authorList>
            <person name="Salbaum J.M."/>
        </authorList>
    </citation>
    <scope>NUCLEOTIDE SEQUENCE [MRNA] OF 599-735 (ISOFORM 2)</scope>
    <scope>DEVELOPMENTAL STAGE</scope>
    <scope>TISSUE SPECIFICITY</scope>
    <source>
        <strain>Swiss Webster</strain>
    </source>
</reference>
<reference key="4">
    <citation type="journal article" date="1999" name="Mamm. Genome">
        <title>Genomic structure and chromosomal localization of the mouse gene Punc.</title>
        <authorList>
            <person name="Salbaum J.M."/>
        </authorList>
    </citation>
    <scope>NUCLEOTIDE SEQUENCE [GENOMIC DNA / MRNA] OF 599-735 (ISOFORMS 1 AND 2)</scope>
    <scope>TISSUE SPECIFICITY</scope>
    <source>
        <strain>FVB/NJ</strain>
    </source>
</reference>
<proteinExistence type="evidence at transcript level"/>
<accession>Q8BQC3</accession>
<accession>O70246</accession>
<accession>Q792T2</accession>
<accession>Q9Z2S6</accession>
<protein>
    <recommendedName>
        <fullName>Immunoglobulin superfamily DCC subclass member 3</fullName>
    </recommendedName>
    <alternativeName>
        <fullName>Putative neuronal cell adhesion molecule</fullName>
    </alternativeName>
</protein>
<gene>
    <name type="primary">Igdcc3</name>
    <name type="synonym">Punc</name>
</gene>
<organism>
    <name type="scientific">Mus musculus</name>
    <name type="common">Mouse</name>
    <dbReference type="NCBI Taxonomy" id="10090"/>
    <lineage>
        <taxon>Eukaryota</taxon>
        <taxon>Metazoa</taxon>
        <taxon>Chordata</taxon>
        <taxon>Craniata</taxon>
        <taxon>Vertebrata</taxon>
        <taxon>Euteleostomi</taxon>
        <taxon>Mammalia</taxon>
        <taxon>Eutheria</taxon>
        <taxon>Euarchontoglires</taxon>
        <taxon>Glires</taxon>
        <taxon>Rodentia</taxon>
        <taxon>Myomorpha</taxon>
        <taxon>Muroidea</taxon>
        <taxon>Muridae</taxon>
        <taxon>Murinae</taxon>
        <taxon>Mus</taxon>
        <taxon>Mus</taxon>
    </lineage>
</organism>